<keyword id="KW-1005">Bacterial flagellum biogenesis</keyword>
<keyword id="KW-0143">Chaperone</keyword>
<keyword id="KW-0963">Cytoplasm</keyword>
<keyword id="KW-0678">Repressor</keyword>
<keyword id="KW-0804">Transcription</keyword>
<keyword id="KW-0805">Transcription regulation</keyword>
<sequence length="120" mass="13912">MERHQHLLSEYQQILTLSEQMLMLATVENWNALVDLEMTYLKAVENTANITISSCTSPVLQELLRQKLRSILENEIEIKRLLQRRLDKLSELVGQSTRQQAVNRTYGQFPDQALLLGETQ</sequence>
<feature type="chain" id="PRO_0000353899" description="Flagellar protein FliT">
    <location>
        <begin position="1"/>
        <end position="120"/>
    </location>
</feature>
<feature type="region of interest" description="Required for homodimerization" evidence="1">
    <location>
        <begin position="1"/>
        <end position="50"/>
    </location>
</feature>
<feature type="region of interest" description="FliD binding" evidence="1">
    <location>
        <begin position="60"/>
        <end position="98"/>
    </location>
</feature>
<evidence type="ECO:0000255" key="1">
    <source>
        <dbReference type="HAMAP-Rule" id="MF_01180"/>
    </source>
</evidence>
<dbReference type="EMBL" id="CP000308">
    <property type="protein sequence ID" value="ABG13182.1"/>
    <property type="molecule type" value="Genomic_DNA"/>
</dbReference>
<dbReference type="PIR" id="AD0224">
    <property type="entry name" value="AD0224"/>
</dbReference>
<dbReference type="RefSeq" id="WP_002211148.1">
    <property type="nucleotide sequence ID" value="NZ_CP009906.1"/>
</dbReference>
<dbReference type="SMR" id="Q1C8P0"/>
<dbReference type="GeneID" id="57976742"/>
<dbReference type="KEGG" id="ypa:YPA_1215"/>
<dbReference type="Proteomes" id="UP000001971">
    <property type="component" value="Chromosome"/>
</dbReference>
<dbReference type="GO" id="GO:0005829">
    <property type="term" value="C:cytosol"/>
    <property type="evidence" value="ECO:0007669"/>
    <property type="project" value="UniProtKB-SubCell"/>
</dbReference>
<dbReference type="GO" id="GO:0044781">
    <property type="term" value="P:bacterial-type flagellum organization"/>
    <property type="evidence" value="ECO:0007669"/>
    <property type="project" value="UniProtKB-KW"/>
</dbReference>
<dbReference type="GO" id="GO:1902209">
    <property type="term" value="P:negative regulation of bacterial-type flagellum assembly"/>
    <property type="evidence" value="ECO:0007669"/>
    <property type="project" value="UniProtKB-UniRule"/>
</dbReference>
<dbReference type="GO" id="GO:0006457">
    <property type="term" value="P:protein folding"/>
    <property type="evidence" value="ECO:0007669"/>
    <property type="project" value="UniProtKB-UniRule"/>
</dbReference>
<dbReference type="Gene3D" id="1.20.58.380">
    <property type="entry name" value="Flagellar protein flit"/>
    <property type="match status" value="1"/>
</dbReference>
<dbReference type="HAMAP" id="MF_01180">
    <property type="entry name" value="FliT"/>
    <property type="match status" value="1"/>
</dbReference>
<dbReference type="InterPro" id="IPR008622">
    <property type="entry name" value="FliT"/>
</dbReference>
<dbReference type="NCBIfam" id="NF007836">
    <property type="entry name" value="PRK10548.1"/>
    <property type="match status" value="1"/>
</dbReference>
<dbReference type="Pfam" id="PF05400">
    <property type="entry name" value="FliT"/>
    <property type="match status" value="1"/>
</dbReference>
<reference key="1">
    <citation type="journal article" date="2006" name="J. Bacteriol.">
        <title>Complete genome sequence of Yersinia pestis strains Antiqua and Nepal516: evidence of gene reduction in an emerging pathogen.</title>
        <authorList>
            <person name="Chain P.S.G."/>
            <person name="Hu P."/>
            <person name="Malfatti S.A."/>
            <person name="Radnedge L."/>
            <person name="Larimer F."/>
            <person name="Vergez L.M."/>
            <person name="Worsham P."/>
            <person name="Chu M.C."/>
            <person name="Andersen G.L."/>
        </authorList>
    </citation>
    <scope>NUCLEOTIDE SEQUENCE [LARGE SCALE GENOMIC DNA]</scope>
    <source>
        <strain>Antiqua</strain>
    </source>
</reference>
<proteinExistence type="inferred from homology"/>
<comment type="function">
    <text evidence="1">Dual-function protein that regulates the transcription of class 2 flagellar operons and that also acts as an export chaperone for the filament-capping protein FliD. As a transcriptional regulator, acts as an anti-FlhDC factor; it directly binds FlhC, thus inhibiting the binding of the FlhC/FlhD complex to class 2 promoters, resulting in decreased expression of class 2 flagellar operons. As a chaperone, effects FliD transition to the membrane by preventing its premature polymerization, and by directing it to the export apparatus.</text>
</comment>
<comment type="subunit">
    <text evidence="1">Homodimer. Interacts with FliD and FlhC.</text>
</comment>
<comment type="subcellular location">
    <subcellularLocation>
        <location evidence="1">Cytoplasm</location>
        <location evidence="1">Cytosol</location>
    </subcellularLocation>
</comment>
<comment type="similarity">
    <text evidence="1">Belongs to the FliT family.</text>
</comment>
<protein>
    <recommendedName>
        <fullName evidence="1">Flagellar protein FliT</fullName>
    </recommendedName>
</protein>
<organism>
    <name type="scientific">Yersinia pestis bv. Antiqua (strain Antiqua)</name>
    <dbReference type="NCBI Taxonomy" id="360102"/>
    <lineage>
        <taxon>Bacteria</taxon>
        <taxon>Pseudomonadati</taxon>
        <taxon>Pseudomonadota</taxon>
        <taxon>Gammaproteobacteria</taxon>
        <taxon>Enterobacterales</taxon>
        <taxon>Yersiniaceae</taxon>
        <taxon>Yersinia</taxon>
    </lineage>
</organism>
<accession>Q1C8P0</accession>
<name>FLIT_YERPA</name>
<gene>
    <name evidence="1" type="primary">fliT</name>
    <name type="ordered locus">YPA_1215</name>
</gene>